<organism>
    <name type="scientific">Streptomyces lividans</name>
    <dbReference type="NCBI Taxonomy" id="1916"/>
    <lineage>
        <taxon>Bacteria</taxon>
        <taxon>Bacillati</taxon>
        <taxon>Actinomycetota</taxon>
        <taxon>Actinomycetes</taxon>
        <taxon>Kitasatosporales</taxon>
        <taxon>Streptomycetaceae</taxon>
        <taxon>Streptomyces</taxon>
    </lineage>
</organism>
<sequence length="383" mass="39682">MRNARSTLITTAGMAFAVLGLLFALAGPSAGRAEAAAGGIHVSNGRVVEGNGSAFVMRGVNHAYTWYPDRTGSIADIAAKGANTVRVVLSSGGRWTKTSASEVSALIGQCKANKVICVLEVHDTTGYGKDGATSLDQAGDYWVGVKSAAWRAQEDYVVVNIGNEPFGNTNYAAWTDATKSAIGKLRGAGLGHALMVDAPNWGQDWSGTMRSNAASVFASDPDRNTVFSIHMYGVYDTAAEVRDYLNAFVGNGLPIVVGEFGDQHSDGNPDEDAIMATAQSLGVGYLGWSWSGNGGGVEYLDMVNGFDPNSLTSWGNRILYGSNGIAATSRTATVYGGGGGSTGGTAPNGYPYCVNGGASDPDGDGWGWENSRSCVVRGSAADH</sequence>
<name>MANA_STRLI</name>
<feature type="signal peptide" evidence="2">
    <location>
        <begin position="1"/>
        <end position="35"/>
    </location>
</feature>
<feature type="chain" id="PRO_0000007900" description="Mannan endo-1,4-beta-mannosidase">
    <location>
        <begin position="36"/>
        <end position="383"/>
    </location>
</feature>
<feature type="domain" description="CBM10" evidence="1">
    <location>
        <begin position="339"/>
        <end position="377"/>
    </location>
</feature>
<keyword id="KW-0903">Direct protein sequencing</keyword>
<keyword id="KW-0326">Glycosidase</keyword>
<keyword id="KW-0378">Hydrolase</keyword>
<keyword id="KW-0732">Signal</keyword>
<reference key="1">
    <citation type="journal article" date="1993" name="Biochem. J.">
        <title>Beta-mannanase of Streptomyces lividans 66: cloning and DNA sequence of the manA gene and characterization of the enzyme.</title>
        <authorList>
            <person name="Arcand N."/>
            <person name="Kluepfel D."/>
            <person name="Paradis F.W."/>
            <person name="Morosoli R."/>
            <person name="Shareck F."/>
        </authorList>
    </citation>
    <scope>NUCLEOTIDE SEQUENCE [GENOMIC DNA]</scope>
    <scope>PROTEIN SEQUENCE OF 36-42</scope>
    <source>
        <strain>66 / 1326</strain>
    </source>
</reference>
<reference key="2">
    <citation type="submission" date="1999-04" db="EMBL/GenBank/DDBJ databases">
        <authorList>
            <person name="Shareck F."/>
        </authorList>
    </citation>
    <scope>SEQUENCE REVISION TO C-TERMINUS</scope>
</reference>
<protein>
    <recommendedName>
        <fullName>Mannan endo-1,4-beta-mannosidase</fullName>
        <ecNumber>3.2.1.78</ecNumber>
    </recommendedName>
    <alternativeName>
        <fullName>1,4-beta-D-mannan mannanohydrolase</fullName>
    </alternativeName>
    <alternativeName>
        <fullName>Beta-mannanase</fullName>
    </alternativeName>
</protein>
<comment type="catalytic activity">
    <reaction>
        <text>Random hydrolysis of (1-&gt;4)-beta-D-mannosidic linkages in mannans, galactomannans and glucomannans.</text>
        <dbReference type="EC" id="3.2.1.78"/>
    </reaction>
</comment>
<comment type="biophysicochemical properties">
    <phDependence>
        <text>Optimum pH is 6.8.</text>
    </phDependence>
    <temperatureDependence>
        <text>Optimum temperature is 58 degrees Celsius.</text>
    </temperatureDependence>
</comment>
<comment type="subunit">
    <text>Monomer.</text>
</comment>
<comment type="similarity">
    <text evidence="3">Belongs to the glycosyl hydrolase 5 (cellulase A) family.</text>
</comment>
<proteinExistence type="evidence at protein level"/>
<gene>
    <name type="primary">manA</name>
</gene>
<dbReference type="EC" id="3.2.1.78"/>
<dbReference type="EMBL" id="M92297">
    <property type="protein sequence ID" value="AAA26710.2"/>
    <property type="molecule type" value="Genomic_DNA"/>
</dbReference>
<dbReference type="PIR" id="S30386">
    <property type="entry name" value="S30386"/>
</dbReference>
<dbReference type="SMR" id="P51529"/>
<dbReference type="CAZy" id="CBM10">
    <property type="family name" value="Carbohydrate-Binding Module Family 10"/>
</dbReference>
<dbReference type="CAZy" id="GH5">
    <property type="family name" value="Glycoside Hydrolase Family 5"/>
</dbReference>
<dbReference type="GO" id="GO:0030248">
    <property type="term" value="F:cellulose binding"/>
    <property type="evidence" value="ECO:0007669"/>
    <property type="project" value="InterPro"/>
</dbReference>
<dbReference type="GO" id="GO:0016985">
    <property type="term" value="F:mannan endo-1,4-beta-mannosidase activity"/>
    <property type="evidence" value="ECO:0007669"/>
    <property type="project" value="UniProtKB-EC"/>
</dbReference>
<dbReference type="GO" id="GO:0000272">
    <property type="term" value="P:polysaccharide catabolic process"/>
    <property type="evidence" value="ECO:0007669"/>
    <property type="project" value="InterPro"/>
</dbReference>
<dbReference type="Gene3D" id="2.30.32.30">
    <property type="entry name" value="CBM10"/>
    <property type="match status" value="1"/>
</dbReference>
<dbReference type="Gene3D" id="3.20.20.80">
    <property type="entry name" value="Glycosidases"/>
    <property type="match status" value="1"/>
</dbReference>
<dbReference type="InterPro" id="IPR009031">
    <property type="entry name" value="CBM10"/>
</dbReference>
<dbReference type="InterPro" id="IPR002883">
    <property type="entry name" value="CBM10/Dockerin_dom"/>
</dbReference>
<dbReference type="InterPro" id="IPR036601">
    <property type="entry name" value="CBM10_sf"/>
</dbReference>
<dbReference type="InterPro" id="IPR001547">
    <property type="entry name" value="Glyco_hydro_5"/>
</dbReference>
<dbReference type="InterPro" id="IPR018087">
    <property type="entry name" value="Glyco_hydro_5_CS"/>
</dbReference>
<dbReference type="InterPro" id="IPR017853">
    <property type="entry name" value="Glycoside_hydrolase_SF"/>
</dbReference>
<dbReference type="PANTHER" id="PTHR42754">
    <property type="entry name" value="ENDOGLUCANASE"/>
    <property type="match status" value="1"/>
</dbReference>
<dbReference type="PANTHER" id="PTHR42754:SF1">
    <property type="entry name" value="LIPOPROTEIN"/>
    <property type="match status" value="1"/>
</dbReference>
<dbReference type="Pfam" id="PF02013">
    <property type="entry name" value="CBM_10"/>
    <property type="match status" value="1"/>
</dbReference>
<dbReference type="Pfam" id="PF00150">
    <property type="entry name" value="Cellulase"/>
    <property type="match status" value="1"/>
</dbReference>
<dbReference type="SMART" id="SM01064">
    <property type="entry name" value="CBM_10"/>
    <property type="match status" value="1"/>
</dbReference>
<dbReference type="SUPFAM" id="SSF51445">
    <property type="entry name" value="(Trans)glycosidases"/>
    <property type="match status" value="1"/>
</dbReference>
<dbReference type="PROSITE" id="PS51763">
    <property type="entry name" value="CBM10"/>
    <property type="match status" value="1"/>
</dbReference>
<dbReference type="PROSITE" id="PS00659">
    <property type="entry name" value="GLYCOSYL_HYDROL_F5"/>
    <property type="match status" value="1"/>
</dbReference>
<evidence type="ECO:0000255" key="1">
    <source>
        <dbReference type="PROSITE-ProRule" id="PRU01099"/>
    </source>
</evidence>
<evidence type="ECO:0000269" key="2">
    <source>
    </source>
</evidence>
<evidence type="ECO:0000305" key="3"/>
<accession>P51529</accession>